<comment type="similarity">
    <text evidence="1">Belongs to the UPF0358 family.</text>
</comment>
<protein>
    <recommendedName>
        <fullName evidence="1">UPF0358 protein LMHCC_1561</fullName>
    </recommendedName>
</protein>
<accession>B8DCE2</accession>
<feature type="chain" id="PRO_1000185427" description="UPF0358 protein LMHCC_1561">
    <location>
        <begin position="1"/>
        <end position="93"/>
    </location>
</feature>
<gene>
    <name type="ordered locus">LMHCC_1561</name>
</gene>
<organism>
    <name type="scientific">Listeria monocytogenes serotype 4a (strain HCC23)</name>
    <dbReference type="NCBI Taxonomy" id="552536"/>
    <lineage>
        <taxon>Bacteria</taxon>
        <taxon>Bacillati</taxon>
        <taxon>Bacillota</taxon>
        <taxon>Bacilli</taxon>
        <taxon>Bacillales</taxon>
        <taxon>Listeriaceae</taxon>
        <taxon>Listeria</taxon>
    </lineage>
</organism>
<name>Y1561_LISMH</name>
<reference key="1">
    <citation type="journal article" date="2011" name="J. Bacteriol.">
        <title>Genome sequence of lineage III Listeria monocytogenes strain HCC23.</title>
        <authorList>
            <person name="Steele C.L."/>
            <person name="Donaldson J.R."/>
            <person name="Paul D."/>
            <person name="Banes M.M."/>
            <person name="Arick T."/>
            <person name="Bridges S.M."/>
            <person name="Lawrence M.L."/>
        </authorList>
    </citation>
    <scope>NUCLEOTIDE SEQUENCE [LARGE SCALE GENOMIC DNA]</scope>
    <source>
        <strain>HCC23</strain>
    </source>
</reference>
<evidence type="ECO:0000255" key="1">
    <source>
        <dbReference type="HAMAP-Rule" id="MF_01560"/>
    </source>
</evidence>
<sequence length="93" mass="10714">MANKKIDHREEAVELLKQDAKRILQLIKVQMDNLTLPQCPAYEEVLDTQMYGLSREINFATRLGLIEPEEGKKLMSTLEKELSALHELSMSKK</sequence>
<dbReference type="EMBL" id="CP001175">
    <property type="protein sequence ID" value="ACK39905.1"/>
    <property type="molecule type" value="Genomic_DNA"/>
</dbReference>
<dbReference type="RefSeq" id="WP_008947443.1">
    <property type="nucleotide sequence ID" value="NC_011660.1"/>
</dbReference>
<dbReference type="SMR" id="B8DCE2"/>
<dbReference type="KEGG" id="lmh:LMHCC_1561"/>
<dbReference type="HOGENOM" id="CLU_160493_1_0_9"/>
<dbReference type="Gene3D" id="1.10.287.750">
    <property type="entry name" value="SO2669-like"/>
    <property type="match status" value="1"/>
</dbReference>
<dbReference type="HAMAP" id="MF_01560">
    <property type="entry name" value="UPF0358"/>
    <property type="match status" value="1"/>
</dbReference>
<dbReference type="InterPro" id="IPR009983">
    <property type="entry name" value="UPF0358"/>
</dbReference>
<dbReference type="InterPro" id="IPR036270">
    <property type="entry name" value="UPF0358_sf"/>
</dbReference>
<dbReference type="NCBIfam" id="NF010187">
    <property type="entry name" value="PRK13666.1"/>
    <property type="match status" value="1"/>
</dbReference>
<dbReference type="Pfam" id="PF07408">
    <property type="entry name" value="DUF1507"/>
    <property type="match status" value="1"/>
</dbReference>
<dbReference type="SUPFAM" id="SSF140404">
    <property type="entry name" value="EF2458-like"/>
    <property type="match status" value="1"/>
</dbReference>
<proteinExistence type="inferred from homology"/>